<comment type="similarity">
    <text evidence="2">Belongs to the CSN12 family.</text>
</comment>
<accession>Q4P8T5</accession>
<accession>A0A0D1DVR8</accession>
<reference key="1">
    <citation type="journal article" date="2006" name="Nature">
        <title>Insights from the genome of the biotrophic fungal plant pathogen Ustilago maydis.</title>
        <authorList>
            <person name="Kaemper J."/>
            <person name="Kahmann R."/>
            <person name="Boelker M."/>
            <person name="Ma L.-J."/>
            <person name="Brefort T."/>
            <person name="Saville B.J."/>
            <person name="Banuett F."/>
            <person name="Kronstad J.W."/>
            <person name="Gold S.E."/>
            <person name="Mueller O."/>
            <person name="Perlin M.H."/>
            <person name="Woesten H.A.B."/>
            <person name="de Vries R."/>
            <person name="Ruiz-Herrera J."/>
            <person name="Reynaga-Pena C.G."/>
            <person name="Snetselaar K."/>
            <person name="McCann M."/>
            <person name="Perez-Martin J."/>
            <person name="Feldbruegge M."/>
            <person name="Basse C.W."/>
            <person name="Steinberg G."/>
            <person name="Ibeas J.I."/>
            <person name="Holloman W."/>
            <person name="Guzman P."/>
            <person name="Farman M.L."/>
            <person name="Stajich J.E."/>
            <person name="Sentandreu R."/>
            <person name="Gonzalez-Prieto J.M."/>
            <person name="Kennell J.C."/>
            <person name="Molina L."/>
            <person name="Schirawski J."/>
            <person name="Mendoza-Mendoza A."/>
            <person name="Greilinger D."/>
            <person name="Muench K."/>
            <person name="Roessel N."/>
            <person name="Scherer M."/>
            <person name="Vranes M."/>
            <person name="Ladendorf O."/>
            <person name="Vincon V."/>
            <person name="Fuchs U."/>
            <person name="Sandrock B."/>
            <person name="Meng S."/>
            <person name="Ho E.C.H."/>
            <person name="Cahill M.J."/>
            <person name="Boyce K.J."/>
            <person name="Klose J."/>
            <person name="Klosterman S.J."/>
            <person name="Deelstra H.J."/>
            <person name="Ortiz-Castellanos L."/>
            <person name="Li W."/>
            <person name="Sanchez-Alonso P."/>
            <person name="Schreier P.H."/>
            <person name="Haeuser-Hahn I."/>
            <person name="Vaupel M."/>
            <person name="Koopmann E."/>
            <person name="Friedrich G."/>
            <person name="Voss H."/>
            <person name="Schlueter T."/>
            <person name="Margolis J."/>
            <person name="Platt D."/>
            <person name="Swimmer C."/>
            <person name="Gnirke A."/>
            <person name="Chen F."/>
            <person name="Vysotskaia V."/>
            <person name="Mannhaupt G."/>
            <person name="Gueldener U."/>
            <person name="Muensterkoetter M."/>
            <person name="Haase D."/>
            <person name="Oesterheld M."/>
            <person name="Mewes H.-W."/>
            <person name="Mauceli E.W."/>
            <person name="DeCaprio D."/>
            <person name="Wade C.M."/>
            <person name="Butler J."/>
            <person name="Young S.K."/>
            <person name="Jaffe D.B."/>
            <person name="Calvo S.E."/>
            <person name="Nusbaum C."/>
            <person name="Galagan J.E."/>
            <person name="Birren B.W."/>
        </authorList>
    </citation>
    <scope>NUCLEOTIDE SEQUENCE [LARGE SCALE GENOMIC DNA]</scope>
    <source>
        <strain>DSM 14603 / FGSC 9021 / UM521</strain>
    </source>
</reference>
<reference key="2">
    <citation type="submission" date="2014-09" db="EMBL/GenBank/DDBJ databases">
        <authorList>
            <person name="Gueldener U."/>
            <person name="Muensterkoetter M."/>
            <person name="Walter M.C."/>
            <person name="Mannhaupt G."/>
            <person name="Kahmann R."/>
        </authorList>
    </citation>
    <scope>GENOME REANNOTATION</scope>
    <source>
        <strain>DSM 14603 / FGSC 9021 / UM521</strain>
    </source>
</reference>
<name>CSN12_MYCMD</name>
<sequence length="454" mass="50083">MKPSIFADAVITACQACDGHALAELFAIGGGVAASALLELGDVRPGGMICSLRKCSGYLGSPWEDMCVNHLRSLYSFSLASSLPASASDAVDGEGKTRSERLGEAFDAYNSVVSAFVRYFSTLTPGRWALPLLRILCLNLRWLAVQADSAAHIASVSNTWAPTRSTQPNKRLEECARQLNKAFSACIADRNADMHESRKWGTYEVVGMVFKTYFRLKSVGLCRNILRAINAADLPDLCAYPRSQQVTFRYYVGVLAFLNEEYDHAELELQASLQMCHRCALINQGLILTYLIPVKLLKGSLPHPSLLDPTTPIGRKLAVYQPFTRALRTGDVKAFDQALANPTIESSLVKRGTYIAIERARDATLRTLLKTIWLSLPLNPTNTRPTRLTLTLLHHATSTDLIRLKYSIKELEWILATLIYKGYVKGYIAHERGVLVLSAKDAFPALRTVAIATT</sequence>
<proteinExistence type="inferred from homology"/>
<protein>
    <recommendedName>
        <fullName>Protein CSN12 homolog</fullName>
    </recommendedName>
</protein>
<organism>
    <name type="scientific">Mycosarcoma maydis</name>
    <name type="common">Corn smut fungus</name>
    <name type="synonym">Ustilago maydis</name>
    <dbReference type="NCBI Taxonomy" id="5270"/>
    <lineage>
        <taxon>Eukaryota</taxon>
        <taxon>Fungi</taxon>
        <taxon>Dikarya</taxon>
        <taxon>Basidiomycota</taxon>
        <taxon>Ustilaginomycotina</taxon>
        <taxon>Ustilaginomycetes</taxon>
        <taxon>Ustilaginales</taxon>
        <taxon>Ustilaginaceae</taxon>
        <taxon>Mycosarcoma</taxon>
    </lineage>
</organism>
<dbReference type="EMBL" id="CM003148">
    <property type="protein sequence ID" value="KIS68384.1"/>
    <property type="molecule type" value="Genomic_DNA"/>
</dbReference>
<dbReference type="RefSeq" id="XP_011389934.1">
    <property type="nucleotide sequence ID" value="XM_011391632.1"/>
</dbReference>
<dbReference type="SMR" id="Q4P8T5"/>
<dbReference type="FunCoup" id="Q4P8T5">
    <property type="interactions" value="484"/>
</dbReference>
<dbReference type="STRING" id="237631.Q4P8T5"/>
<dbReference type="EnsemblFungi" id="KIS68384">
    <property type="protein sequence ID" value="KIS68384"/>
    <property type="gene ID" value="UMAG_03478"/>
</dbReference>
<dbReference type="GeneID" id="23563921"/>
<dbReference type="KEGG" id="uma:UMAG_03478"/>
<dbReference type="VEuPathDB" id="FungiDB:UMAG_03478"/>
<dbReference type="eggNOG" id="KOG2688">
    <property type="taxonomic scope" value="Eukaryota"/>
</dbReference>
<dbReference type="HOGENOM" id="CLU_031567_2_1_1"/>
<dbReference type="InParanoid" id="Q4P8T5"/>
<dbReference type="OMA" id="ESQTNWI"/>
<dbReference type="OrthoDB" id="10252687at2759"/>
<dbReference type="Proteomes" id="UP000000561">
    <property type="component" value="Chromosome 9"/>
</dbReference>
<dbReference type="GO" id="GO:0070390">
    <property type="term" value="C:transcription export complex 2"/>
    <property type="evidence" value="ECO:0000318"/>
    <property type="project" value="GO_Central"/>
</dbReference>
<dbReference type="GO" id="GO:0003690">
    <property type="term" value="F:double-stranded DNA binding"/>
    <property type="evidence" value="ECO:0000318"/>
    <property type="project" value="GO_Central"/>
</dbReference>
<dbReference type="GO" id="GO:0003723">
    <property type="term" value="F:RNA binding"/>
    <property type="evidence" value="ECO:0000318"/>
    <property type="project" value="GO_Central"/>
</dbReference>
<dbReference type="GO" id="GO:0016973">
    <property type="term" value="P:poly(A)+ mRNA export from nucleus"/>
    <property type="evidence" value="ECO:0000318"/>
    <property type="project" value="GO_Central"/>
</dbReference>
<dbReference type="GO" id="GO:0000973">
    <property type="term" value="P:post-transcriptional tethering of RNA polymerase II gene DNA at nuclear periphery"/>
    <property type="evidence" value="ECO:0000318"/>
    <property type="project" value="GO_Central"/>
</dbReference>
<dbReference type="GO" id="GO:0006368">
    <property type="term" value="P:transcription elongation by RNA polymerase II"/>
    <property type="evidence" value="ECO:0000318"/>
    <property type="project" value="GO_Central"/>
</dbReference>
<dbReference type="Gene3D" id="1.10.10.10">
    <property type="entry name" value="Winged helix-like DNA-binding domain superfamily/Winged helix DNA-binding domain"/>
    <property type="match status" value="1"/>
</dbReference>
<dbReference type="InterPro" id="IPR045114">
    <property type="entry name" value="Csn12-like"/>
</dbReference>
<dbReference type="InterPro" id="IPR000717">
    <property type="entry name" value="PCI_dom"/>
</dbReference>
<dbReference type="InterPro" id="IPR036388">
    <property type="entry name" value="WH-like_DNA-bd_sf"/>
</dbReference>
<dbReference type="PANTHER" id="PTHR12732:SF0">
    <property type="entry name" value="PCI DOMAIN-CONTAINING PROTEIN 2"/>
    <property type="match status" value="1"/>
</dbReference>
<dbReference type="PANTHER" id="PTHR12732">
    <property type="entry name" value="UNCHARACTERIZED PROTEASOME COMPONENT REGION PCI-CONTAINING"/>
    <property type="match status" value="1"/>
</dbReference>
<dbReference type="SMART" id="SM00753">
    <property type="entry name" value="PAM"/>
    <property type="match status" value="1"/>
</dbReference>
<dbReference type="PROSITE" id="PS50250">
    <property type="entry name" value="PCI"/>
    <property type="match status" value="1"/>
</dbReference>
<feature type="chain" id="PRO_0000121045" description="Protein CSN12 homolog">
    <location>
        <begin position="1"/>
        <end position="454"/>
    </location>
</feature>
<feature type="domain" description="PCI" evidence="1">
    <location>
        <begin position="246"/>
        <end position="442"/>
    </location>
</feature>
<keyword id="KW-1185">Reference proteome</keyword>
<gene>
    <name type="primary">CSN12</name>
    <name type="ORF">UMAG_03478</name>
</gene>
<evidence type="ECO:0000255" key="1">
    <source>
        <dbReference type="PROSITE-ProRule" id="PRU01185"/>
    </source>
</evidence>
<evidence type="ECO:0000305" key="2"/>